<comment type="function">
    <text evidence="1">Has antimicrobial activity against Gram-positive bacteria B.subtilis (MIC=257 ug/ml) and S.aureus (MIC=274 ug/ml), and against Gram-negative bacteria E.coli (MIC=302 ug/ml) and P.aeruginosa (MIC=259 ug/ml).</text>
</comment>
<comment type="subunit">
    <text evidence="1">Monomer.</text>
</comment>
<comment type="subcellular location">
    <subcellularLocation>
        <location evidence="1">Secreted</location>
        <location evidence="1">Extracellular space</location>
    </subcellularLocation>
</comment>
<comment type="tissue specificity">
    <text evidence="1">Found in the liquid endosperm contained in green fruit of coconut palms, also known as coconut water (at protein level).</text>
</comment>
<comment type="mass spectrometry" mass="950.0" method="MALDI" evidence="1"/>
<feature type="peptide" id="PRO_0000399053" description="Antimicrobial peptide 3" evidence="1">
    <location>
        <begin position="1"/>
        <end position="8"/>
    </location>
</feature>
<organism>
    <name type="scientific">Cocos nucifera</name>
    <name type="common">Coconut palm</name>
    <dbReference type="NCBI Taxonomy" id="13894"/>
    <lineage>
        <taxon>Eukaryota</taxon>
        <taxon>Viridiplantae</taxon>
        <taxon>Streptophyta</taxon>
        <taxon>Embryophyta</taxon>
        <taxon>Tracheophyta</taxon>
        <taxon>Spermatophyta</taxon>
        <taxon>Magnoliopsida</taxon>
        <taxon>Liliopsida</taxon>
        <taxon>Arecaceae</taxon>
        <taxon>Arecoideae</taxon>
        <taxon>Cocoseae</taxon>
        <taxon>Attaleinae</taxon>
        <taxon>Cocos</taxon>
    </lineage>
</organism>
<accession>P86707</accession>
<keyword id="KW-0929">Antimicrobial</keyword>
<keyword id="KW-0903">Direct protein sequencing</keyword>
<keyword id="KW-0611">Plant defense</keyword>
<keyword id="KW-0964">Secreted</keyword>
<sequence length="8" mass="967">YCSYTMEA</sequence>
<reference evidence="3" key="1">
    <citation type="journal article" date="2009" name="Peptides">
        <title>Identification and structural insights of three novel antimicrobial peptides isolated from green coconut water.</title>
        <authorList>
            <person name="Mandal S.M."/>
            <person name="Dey S."/>
            <person name="Mandal M."/>
            <person name="Sarkar S."/>
            <person name="Maria-Neto S."/>
            <person name="Franco O.L."/>
        </authorList>
    </citation>
    <scope>PROTEIN SEQUENCE</scope>
    <scope>FUNCTION</scope>
    <scope>SUBUNIT</scope>
    <scope>SUBCELLULAR LOCATION</scope>
    <scope>TISSUE SPECIFICITY</scope>
    <scope>MASS SPECTROMETRY</scope>
    <source>
        <tissue evidence="1">Endosperm</tissue>
    </source>
</reference>
<name>AMP3_COCNU</name>
<protein>
    <recommendedName>
        <fullName evidence="2">Antimicrobial peptide 3</fullName>
        <shortName evidence="2">Cn-AMP3</shortName>
    </recommendedName>
</protein>
<evidence type="ECO:0000269" key="1">
    <source>
    </source>
</evidence>
<evidence type="ECO:0000303" key="2">
    <source>
    </source>
</evidence>
<evidence type="ECO:0000305" key="3"/>
<dbReference type="GO" id="GO:0005615">
    <property type="term" value="C:extracellular space"/>
    <property type="evidence" value="ECO:0000314"/>
    <property type="project" value="UniProtKB"/>
</dbReference>
<dbReference type="GO" id="GO:0050829">
    <property type="term" value="P:defense response to Gram-negative bacterium"/>
    <property type="evidence" value="ECO:0000314"/>
    <property type="project" value="UniProtKB"/>
</dbReference>
<dbReference type="GO" id="GO:0050830">
    <property type="term" value="P:defense response to Gram-positive bacterium"/>
    <property type="evidence" value="ECO:0000314"/>
    <property type="project" value="UniProtKB"/>
</dbReference>
<proteinExistence type="evidence at protein level"/>